<feature type="chain" id="PRO_0000266508" description="Large ribosomal subunit protein uL14">
    <location>
        <begin position="1"/>
        <end position="122"/>
    </location>
</feature>
<gene>
    <name evidence="1" type="primary">rplN</name>
    <name type="ordered locus">MXAN_3309</name>
</gene>
<sequence>MIQMTSVLDVADNSGAKKVFCIKVLGGSKRKYASIGDVIVVSVREALPNSKVKKGDVAKAVIVRTKREVGRPDGSYIKFDGNSAVLINKDMEPIGTRIFGPVARELRARKFMKIISLAPEVL</sequence>
<comment type="function">
    <text evidence="1">Binds to 23S rRNA. Forms part of two intersubunit bridges in the 70S ribosome.</text>
</comment>
<comment type="subunit">
    <text evidence="1">Part of the 50S ribosomal subunit. Forms a cluster with proteins L3 and L19. In the 70S ribosome, L14 and L19 interact and together make contacts with the 16S rRNA in bridges B5 and B8.</text>
</comment>
<comment type="similarity">
    <text evidence="1">Belongs to the universal ribosomal protein uL14 family.</text>
</comment>
<evidence type="ECO:0000255" key="1">
    <source>
        <dbReference type="HAMAP-Rule" id="MF_01367"/>
    </source>
</evidence>
<evidence type="ECO:0000305" key="2"/>
<keyword id="KW-1185">Reference proteome</keyword>
<keyword id="KW-0687">Ribonucleoprotein</keyword>
<keyword id="KW-0689">Ribosomal protein</keyword>
<keyword id="KW-0694">RNA-binding</keyword>
<keyword id="KW-0699">rRNA-binding</keyword>
<dbReference type="EMBL" id="CP000113">
    <property type="protein sequence ID" value="ABF91701.1"/>
    <property type="molecule type" value="Genomic_DNA"/>
</dbReference>
<dbReference type="RefSeq" id="WP_002633598.1">
    <property type="nucleotide sequence ID" value="NC_008095.1"/>
</dbReference>
<dbReference type="SMR" id="Q1D765"/>
<dbReference type="STRING" id="246197.MXAN_3309"/>
<dbReference type="EnsemblBacteria" id="ABF91701">
    <property type="protein sequence ID" value="ABF91701"/>
    <property type="gene ID" value="MXAN_3309"/>
</dbReference>
<dbReference type="GeneID" id="41360662"/>
<dbReference type="KEGG" id="mxa:MXAN_3309"/>
<dbReference type="eggNOG" id="COG0093">
    <property type="taxonomic scope" value="Bacteria"/>
</dbReference>
<dbReference type="HOGENOM" id="CLU_095071_2_1_7"/>
<dbReference type="OrthoDB" id="9806379at2"/>
<dbReference type="Proteomes" id="UP000002402">
    <property type="component" value="Chromosome"/>
</dbReference>
<dbReference type="GO" id="GO:0022625">
    <property type="term" value="C:cytosolic large ribosomal subunit"/>
    <property type="evidence" value="ECO:0007669"/>
    <property type="project" value="TreeGrafter"/>
</dbReference>
<dbReference type="GO" id="GO:0070180">
    <property type="term" value="F:large ribosomal subunit rRNA binding"/>
    <property type="evidence" value="ECO:0007669"/>
    <property type="project" value="TreeGrafter"/>
</dbReference>
<dbReference type="GO" id="GO:0003735">
    <property type="term" value="F:structural constituent of ribosome"/>
    <property type="evidence" value="ECO:0007669"/>
    <property type="project" value="InterPro"/>
</dbReference>
<dbReference type="GO" id="GO:0006412">
    <property type="term" value="P:translation"/>
    <property type="evidence" value="ECO:0007669"/>
    <property type="project" value="UniProtKB-UniRule"/>
</dbReference>
<dbReference type="CDD" id="cd00337">
    <property type="entry name" value="Ribosomal_uL14"/>
    <property type="match status" value="1"/>
</dbReference>
<dbReference type="FunFam" id="2.40.150.20:FF:000001">
    <property type="entry name" value="50S ribosomal protein L14"/>
    <property type="match status" value="1"/>
</dbReference>
<dbReference type="Gene3D" id="2.40.150.20">
    <property type="entry name" value="Ribosomal protein L14"/>
    <property type="match status" value="1"/>
</dbReference>
<dbReference type="HAMAP" id="MF_01367">
    <property type="entry name" value="Ribosomal_uL14"/>
    <property type="match status" value="1"/>
</dbReference>
<dbReference type="InterPro" id="IPR000218">
    <property type="entry name" value="Ribosomal_uL14"/>
</dbReference>
<dbReference type="InterPro" id="IPR005745">
    <property type="entry name" value="Ribosomal_uL14_bac-type"/>
</dbReference>
<dbReference type="InterPro" id="IPR019972">
    <property type="entry name" value="Ribosomal_uL14_CS"/>
</dbReference>
<dbReference type="InterPro" id="IPR036853">
    <property type="entry name" value="Ribosomal_uL14_sf"/>
</dbReference>
<dbReference type="NCBIfam" id="TIGR01067">
    <property type="entry name" value="rplN_bact"/>
    <property type="match status" value="1"/>
</dbReference>
<dbReference type="PANTHER" id="PTHR11761">
    <property type="entry name" value="50S/60S RIBOSOMAL PROTEIN L14/L23"/>
    <property type="match status" value="1"/>
</dbReference>
<dbReference type="PANTHER" id="PTHR11761:SF3">
    <property type="entry name" value="LARGE RIBOSOMAL SUBUNIT PROTEIN UL14M"/>
    <property type="match status" value="1"/>
</dbReference>
<dbReference type="Pfam" id="PF00238">
    <property type="entry name" value="Ribosomal_L14"/>
    <property type="match status" value="1"/>
</dbReference>
<dbReference type="SMART" id="SM01374">
    <property type="entry name" value="Ribosomal_L14"/>
    <property type="match status" value="1"/>
</dbReference>
<dbReference type="SUPFAM" id="SSF50193">
    <property type="entry name" value="Ribosomal protein L14"/>
    <property type="match status" value="1"/>
</dbReference>
<dbReference type="PROSITE" id="PS00049">
    <property type="entry name" value="RIBOSOMAL_L14"/>
    <property type="match status" value="1"/>
</dbReference>
<name>RL14_MYXXD</name>
<protein>
    <recommendedName>
        <fullName evidence="1">Large ribosomal subunit protein uL14</fullName>
    </recommendedName>
    <alternativeName>
        <fullName evidence="2">50S ribosomal protein L14</fullName>
    </alternativeName>
</protein>
<organism>
    <name type="scientific">Myxococcus xanthus (strain DK1622)</name>
    <dbReference type="NCBI Taxonomy" id="246197"/>
    <lineage>
        <taxon>Bacteria</taxon>
        <taxon>Pseudomonadati</taxon>
        <taxon>Myxococcota</taxon>
        <taxon>Myxococcia</taxon>
        <taxon>Myxococcales</taxon>
        <taxon>Cystobacterineae</taxon>
        <taxon>Myxococcaceae</taxon>
        <taxon>Myxococcus</taxon>
    </lineage>
</organism>
<accession>Q1D765</accession>
<reference key="1">
    <citation type="journal article" date="2006" name="Proc. Natl. Acad. Sci. U.S.A.">
        <title>Evolution of sensory complexity recorded in a myxobacterial genome.</title>
        <authorList>
            <person name="Goldman B.S."/>
            <person name="Nierman W.C."/>
            <person name="Kaiser D."/>
            <person name="Slater S.C."/>
            <person name="Durkin A.S."/>
            <person name="Eisen J.A."/>
            <person name="Ronning C.M."/>
            <person name="Barbazuk W.B."/>
            <person name="Blanchard M."/>
            <person name="Field C."/>
            <person name="Halling C."/>
            <person name="Hinkle G."/>
            <person name="Iartchuk O."/>
            <person name="Kim H.S."/>
            <person name="Mackenzie C."/>
            <person name="Madupu R."/>
            <person name="Miller N."/>
            <person name="Shvartsbeyn A."/>
            <person name="Sullivan S.A."/>
            <person name="Vaudin M."/>
            <person name="Wiegand R."/>
            <person name="Kaplan H.B."/>
        </authorList>
    </citation>
    <scope>NUCLEOTIDE SEQUENCE [LARGE SCALE GENOMIC DNA]</scope>
    <source>
        <strain>DK1622</strain>
    </source>
</reference>
<proteinExistence type="inferred from homology"/>